<organism>
    <name type="scientific">Synechococcus sp. (strain ATCC 27144 / PCC 6301 / SAUG 1402/1)</name>
    <name type="common">Anacystis nidulans</name>
    <dbReference type="NCBI Taxonomy" id="269084"/>
    <lineage>
        <taxon>Bacteria</taxon>
        <taxon>Bacillati</taxon>
        <taxon>Cyanobacteriota</taxon>
        <taxon>Cyanophyceae</taxon>
        <taxon>Synechococcales</taxon>
        <taxon>Synechococcaceae</taxon>
        <taxon>Synechococcus</taxon>
    </lineage>
</organism>
<name>PURQ_SYNP6</name>
<sequence>MNVGVIVFPGSNCDRDVQWVTAGLLGQSTRMIWHEERDLSGLDLIVVPGGFSYGDYLRCGAIARFSPAMQATVAFAEAGGLVLGICNGFQILTEVGLLPGALVRNRDLHFRCETTPLRVERSDRPWSRTYQQGQILNLPIAHGEGRYHADPATLAALEANGQVLFRYLDNPNGSCNDIAGITNVAGNVLGMMPHPERAAEAIAGSVDGLGLFAGLLEPVAA</sequence>
<comment type="function">
    <text evidence="1">Part of the phosphoribosylformylglycinamidine synthase complex involved in the purines biosynthetic pathway. Catalyzes the ATP-dependent conversion of formylglycinamide ribonucleotide (FGAR) and glutamine to yield formylglycinamidine ribonucleotide (FGAM) and glutamate. The FGAM synthase complex is composed of three subunits. PurQ produces an ammonia molecule by converting glutamine to glutamate. PurL transfers the ammonia molecule to FGAR to form FGAM in an ATP-dependent manner. PurS interacts with PurQ and PurL and is thought to assist in the transfer of the ammonia molecule from PurQ to PurL.</text>
</comment>
<comment type="catalytic activity">
    <reaction evidence="1">
        <text>N(2)-formyl-N(1)-(5-phospho-beta-D-ribosyl)glycinamide + L-glutamine + ATP + H2O = 2-formamido-N(1)-(5-O-phospho-beta-D-ribosyl)acetamidine + L-glutamate + ADP + phosphate + H(+)</text>
        <dbReference type="Rhea" id="RHEA:17129"/>
        <dbReference type="ChEBI" id="CHEBI:15377"/>
        <dbReference type="ChEBI" id="CHEBI:15378"/>
        <dbReference type="ChEBI" id="CHEBI:29985"/>
        <dbReference type="ChEBI" id="CHEBI:30616"/>
        <dbReference type="ChEBI" id="CHEBI:43474"/>
        <dbReference type="ChEBI" id="CHEBI:58359"/>
        <dbReference type="ChEBI" id="CHEBI:147286"/>
        <dbReference type="ChEBI" id="CHEBI:147287"/>
        <dbReference type="ChEBI" id="CHEBI:456216"/>
        <dbReference type="EC" id="6.3.5.3"/>
    </reaction>
</comment>
<comment type="catalytic activity">
    <reaction evidence="1">
        <text>L-glutamine + H2O = L-glutamate + NH4(+)</text>
        <dbReference type="Rhea" id="RHEA:15889"/>
        <dbReference type="ChEBI" id="CHEBI:15377"/>
        <dbReference type="ChEBI" id="CHEBI:28938"/>
        <dbReference type="ChEBI" id="CHEBI:29985"/>
        <dbReference type="ChEBI" id="CHEBI:58359"/>
        <dbReference type="EC" id="3.5.1.2"/>
    </reaction>
</comment>
<comment type="pathway">
    <text evidence="1">Purine metabolism; IMP biosynthesis via de novo pathway; 5-amino-1-(5-phospho-D-ribosyl)imidazole from N(2)-formyl-N(1)-(5-phospho-D-ribosyl)glycinamide: step 1/2.</text>
</comment>
<comment type="subunit">
    <text evidence="1">Part of the FGAM synthase complex composed of 1 PurL, 1 PurQ and 2 PurS subunits.</text>
</comment>
<comment type="subcellular location">
    <subcellularLocation>
        <location evidence="1">Cytoplasm</location>
    </subcellularLocation>
</comment>
<proteinExistence type="inferred from homology"/>
<gene>
    <name evidence="1" type="primary">purQ</name>
    <name type="ordered locus">syc0720_c</name>
</gene>
<dbReference type="EC" id="6.3.5.3" evidence="1"/>
<dbReference type="EC" id="3.5.1.2" evidence="1"/>
<dbReference type="EMBL" id="AP008231">
    <property type="protein sequence ID" value="BAD78910.1"/>
    <property type="molecule type" value="Genomic_DNA"/>
</dbReference>
<dbReference type="RefSeq" id="WP_011243032.1">
    <property type="nucleotide sequence ID" value="NZ_CP085785.1"/>
</dbReference>
<dbReference type="SMR" id="Q5N459"/>
<dbReference type="GeneID" id="72429665"/>
<dbReference type="KEGG" id="syc:syc0720_c"/>
<dbReference type="eggNOG" id="COG0047">
    <property type="taxonomic scope" value="Bacteria"/>
</dbReference>
<dbReference type="UniPathway" id="UPA00074">
    <property type="reaction ID" value="UER00128"/>
</dbReference>
<dbReference type="Proteomes" id="UP000001175">
    <property type="component" value="Chromosome"/>
</dbReference>
<dbReference type="GO" id="GO:0005737">
    <property type="term" value="C:cytoplasm"/>
    <property type="evidence" value="ECO:0007669"/>
    <property type="project" value="UniProtKB-SubCell"/>
</dbReference>
<dbReference type="GO" id="GO:0005524">
    <property type="term" value="F:ATP binding"/>
    <property type="evidence" value="ECO:0007669"/>
    <property type="project" value="UniProtKB-KW"/>
</dbReference>
<dbReference type="GO" id="GO:0004359">
    <property type="term" value="F:glutaminase activity"/>
    <property type="evidence" value="ECO:0007669"/>
    <property type="project" value="UniProtKB-EC"/>
</dbReference>
<dbReference type="GO" id="GO:0004642">
    <property type="term" value="F:phosphoribosylformylglycinamidine synthase activity"/>
    <property type="evidence" value="ECO:0007669"/>
    <property type="project" value="UniProtKB-UniRule"/>
</dbReference>
<dbReference type="GO" id="GO:0006189">
    <property type="term" value="P:'de novo' IMP biosynthetic process"/>
    <property type="evidence" value="ECO:0007669"/>
    <property type="project" value="UniProtKB-UniRule"/>
</dbReference>
<dbReference type="CDD" id="cd01740">
    <property type="entry name" value="GATase1_FGAR_AT"/>
    <property type="match status" value="1"/>
</dbReference>
<dbReference type="Gene3D" id="3.40.50.880">
    <property type="match status" value="1"/>
</dbReference>
<dbReference type="HAMAP" id="MF_00421">
    <property type="entry name" value="PurQ"/>
    <property type="match status" value="1"/>
</dbReference>
<dbReference type="InterPro" id="IPR029062">
    <property type="entry name" value="Class_I_gatase-like"/>
</dbReference>
<dbReference type="InterPro" id="IPR010075">
    <property type="entry name" value="PRibForGlyAmidine_synth_PurQ"/>
</dbReference>
<dbReference type="NCBIfam" id="TIGR01737">
    <property type="entry name" value="FGAM_synth_I"/>
    <property type="match status" value="1"/>
</dbReference>
<dbReference type="NCBIfam" id="NF002957">
    <property type="entry name" value="PRK03619.1"/>
    <property type="match status" value="1"/>
</dbReference>
<dbReference type="PANTHER" id="PTHR47552">
    <property type="entry name" value="PHOSPHORIBOSYLFORMYLGLYCINAMIDINE SYNTHASE SUBUNIT PURQ"/>
    <property type="match status" value="1"/>
</dbReference>
<dbReference type="PANTHER" id="PTHR47552:SF1">
    <property type="entry name" value="PHOSPHORIBOSYLFORMYLGLYCINAMIDINE SYNTHASE SUBUNIT PURQ"/>
    <property type="match status" value="1"/>
</dbReference>
<dbReference type="Pfam" id="PF13507">
    <property type="entry name" value="GATase_5"/>
    <property type="match status" value="1"/>
</dbReference>
<dbReference type="PIRSF" id="PIRSF001586">
    <property type="entry name" value="FGAM_synth_I"/>
    <property type="match status" value="1"/>
</dbReference>
<dbReference type="SMART" id="SM01211">
    <property type="entry name" value="GATase_5"/>
    <property type="match status" value="1"/>
</dbReference>
<dbReference type="SUPFAM" id="SSF52317">
    <property type="entry name" value="Class I glutamine amidotransferase-like"/>
    <property type="match status" value="1"/>
</dbReference>
<dbReference type="PROSITE" id="PS51273">
    <property type="entry name" value="GATASE_TYPE_1"/>
    <property type="match status" value="1"/>
</dbReference>
<reference key="1">
    <citation type="journal article" date="2007" name="Photosyn. Res.">
        <title>Complete nucleotide sequence of the freshwater unicellular cyanobacterium Synechococcus elongatus PCC 6301 chromosome: gene content and organization.</title>
        <authorList>
            <person name="Sugita C."/>
            <person name="Ogata K."/>
            <person name="Shikata M."/>
            <person name="Jikuya H."/>
            <person name="Takano J."/>
            <person name="Furumichi M."/>
            <person name="Kanehisa M."/>
            <person name="Omata T."/>
            <person name="Sugiura M."/>
            <person name="Sugita M."/>
        </authorList>
    </citation>
    <scope>NUCLEOTIDE SEQUENCE [LARGE SCALE GENOMIC DNA]</scope>
    <source>
        <strain>ATCC 27144 / PCC 6301 / SAUG 1402/1</strain>
    </source>
</reference>
<protein>
    <recommendedName>
        <fullName evidence="1">Phosphoribosylformylglycinamidine synthase subunit PurQ</fullName>
        <shortName evidence="1">FGAM synthase</shortName>
        <ecNumber evidence="1">6.3.5.3</ecNumber>
    </recommendedName>
    <alternativeName>
        <fullName evidence="1">Formylglycinamide ribonucleotide amidotransferase subunit I</fullName>
        <shortName evidence="1">FGAR amidotransferase I</shortName>
        <shortName evidence="1">FGAR-AT I</shortName>
    </alternativeName>
    <alternativeName>
        <fullName evidence="1">Glutaminase PurQ</fullName>
        <ecNumber evidence="1">3.5.1.2</ecNumber>
    </alternativeName>
    <alternativeName>
        <fullName evidence="1">Phosphoribosylformylglycinamidine synthase subunit I</fullName>
    </alternativeName>
</protein>
<feature type="chain" id="PRO_0000100595" description="Phosphoribosylformylglycinamidine synthase subunit PurQ">
    <location>
        <begin position="1"/>
        <end position="221"/>
    </location>
</feature>
<feature type="domain" description="Glutamine amidotransferase type-1" evidence="1">
    <location>
        <begin position="2"/>
        <end position="221"/>
    </location>
</feature>
<feature type="active site" description="Nucleophile" evidence="1">
    <location>
        <position position="86"/>
    </location>
</feature>
<feature type="active site" evidence="1">
    <location>
        <position position="194"/>
    </location>
</feature>
<feature type="active site" evidence="1">
    <location>
        <position position="196"/>
    </location>
</feature>
<accession>Q5N459</accession>
<keyword id="KW-0067">ATP-binding</keyword>
<keyword id="KW-0963">Cytoplasm</keyword>
<keyword id="KW-0315">Glutamine amidotransferase</keyword>
<keyword id="KW-0378">Hydrolase</keyword>
<keyword id="KW-0436">Ligase</keyword>
<keyword id="KW-0547">Nucleotide-binding</keyword>
<keyword id="KW-0658">Purine biosynthesis</keyword>
<evidence type="ECO:0000255" key="1">
    <source>
        <dbReference type="HAMAP-Rule" id="MF_00421"/>
    </source>
</evidence>